<organism>
    <name type="scientific">Guillardia theta</name>
    <name type="common">Cryptophyte</name>
    <name type="synonym">Cryptomonas phi</name>
    <dbReference type="NCBI Taxonomy" id="55529"/>
    <lineage>
        <taxon>Eukaryota</taxon>
        <taxon>Cryptophyceae</taxon>
        <taxon>Pyrenomonadales</taxon>
        <taxon>Geminigeraceae</taxon>
        <taxon>Guillardia</taxon>
    </lineage>
</organism>
<gene>
    <name evidence="1" type="primary">rps20</name>
</gene>
<name>RR20_GUITH</name>
<evidence type="ECO:0000255" key="1">
    <source>
        <dbReference type="HAMAP-Rule" id="MF_00500"/>
    </source>
</evidence>
<evidence type="ECO:0000256" key="2">
    <source>
        <dbReference type="SAM" id="MobiDB-lite"/>
    </source>
</evidence>
<evidence type="ECO:0000305" key="3"/>
<feature type="chain" id="PRO_0000168073" description="Small ribosomal subunit protein bS20c">
    <location>
        <begin position="1"/>
        <end position="95"/>
    </location>
</feature>
<feature type="region of interest" description="Disordered" evidence="2">
    <location>
        <begin position="76"/>
        <end position="95"/>
    </location>
</feature>
<feature type="compositionally biased region" description="Basic residues" evidence="2">
    <location>
        <begin position="80"/>
        <end position="95"/>
    </location>
</feature>
<sequence length="95" mass="10822">MANSASAIKRIELNERNRLRNKTYKSMLKTYYKKCIVAIETTNNNDLETSNLRELVAITQSKIDKAVQKGIIHSNNGSAKKAKLTKRLKEKKISL</sequence>
<proteinExistence type="inferred from homology"/>
<protein>
    <recommendedName>
        <fullName evidence="1">Small ribosomal subunit protein bS20c</fullName>
    </recommendedName>
    <alternativeName>
        <fullName evidence="3">30S ribosomal protein S20, chloroplastic</fullName>
    </alternativeName>
</protein>
<geneLocation type="chloroplast"/>
<comment type="function">
    <text evidence="1">Binds directly to 16S ribosomal RNA.</text>
</comment>
<comment type="subcellular location">
    <subcellularLocation>
        <location>Plastid</location>
        <location>Chloroplast</location>
    </subcellularLocation>
</comment>
<comment type="similarity">
    <text evidence="1">Belongs to the bacterial ribosomal protein bS20 family.</text>
</comment>
<accession>O78486</accession>
<keyword id="KW-0150">Chloroplast</keyword>
<keyword id="KW-0934">Plastid</keyword>
<keyword id="KW-0687">Ribonucleoprotein</keyword>
<keyword id="KW-0689">Ribosomal protein</keyword>
<keyword id="KW-0694">RNA-binding</keyword>
<keyword id="KW-0699">rRNA-binding</keyword>
<reference key="1">
    <citation type="journal article" date="1999" name="J. Mol. Evol.">
        <title>The plastid genome of the cryptophyte alga, Guillardia theta: complete sequence and conserved synteny groups confirm its common ancestry with red algae.</title>
        <authorList>
            <person name="Douglas S.E."/>
            <person name="Penny S.L."/>
        </authorList>
    </citation>
    <scope>NUCLEOTIDE SEQUENCE [LARGE SCALE GENOMIC DNA]</scope>
</reference>
<dbReference type="EMBL" id="AF041468">
    <property type="protein sequence ID" value="AAC35677.1"/>
    <property type="molecule type" value="Genomic_DNA"/>
</dbReference>
<dbReference type="RefSeq" id="NP_050743.1">
    <property type="nucleotide sequence ID" value="NC_000926.1"/>
</dbReference>
<dbReference type="SMR" id="O78486"/>
<dbReference type="GeneID" id="857048"/>
<dbReference type="HOGENOM" id="CLU_160655_5_0_1"/>
<dbReference type="OMA" id="KECARQT"/>
<dbReference type="GO" id="GO:0009507">
    <property type="term" value="C:chloroplast"/>
    <property type="evidence" value="ECO:0007669"/>
    <property type="project" value="UniProtKB-SubCell"/>
</dbReference>
<dbReference type="GO" id="GO:0005829">
    <property type="term" value="C:cytosol"/>
    <property type="evidence" value="ECO:0007669"/>
    <property type="project" value="TreeGrafter"/>
</dbReference>
<dbReference type="GO" id="GO:0015935">
    <property type="term" value="C:small ribosomal subunit"/>
    <property type="evidence" value="ECO:0007669"/>
    <property type="project" value="TreeGrafter"/>
</dbReference>
<dbReference type="GO" id="GO:0070181">
    <property type="term" value="F:small ribosomal subunit rRNA binding"/>
    <property type="evidence" value="ECO:0007669"/>
    <property type="project" value="TreeGrafter"/>
</dbReference>
<dbReference type="GO" id="GO:0003735">
    <property type="term" value="F:structural constituent of ribosome"/>
    <property type="evidence" value="ECO:0007669"/>
    <property type="project" value="InterPro"/>
</dbReference>
<dbReference type="GO" id="GO:0006412">
    <property type="term" value="P:translation"/>
    <property type="evidence" value="ECO:0007669"/>
    <property type="project" value="UniProtKB-UniRule"/>
</dbReference>
<dbReference type="FunFam" id="1.20.58.110:FF:000001">
    <property type="entry name" value="30S ribosomal protein S20"/>
    <property type="match status" value="1"/>
</dbReference>
<dbReference type="Gene3D" id="1.20.58.110">
    <property type="entry name" value="Ribosomal protein S20"/>
    <property type="match status" value="1"/>
</dbReference>
<dbReference type="HAMAP" id="MF_00500">
    <property type="entry name" value="Ribosomal_bS20"/>
    <property type="match status" value="1"/>
</dbReference>
<dbReference type="InterPro" id="IPR002583">
    <property type="entry name" value="Ribosomal_bS20"/>
</dbReference>
<dbReference type="InterPro" id="IPR036510">
    <property type="entry name" value="Ribosomal_bS20_sf"/>
</dbReference>
<dbReference type="NCBIfam" id="TIGR00029">
    <property type="entry name" value="S20"/>
    <property type="match status" value="1"/>
</dbReference>
<dbReference type="PANTHER" id="PTHR33398">
    <property type="entry name" value="30S RIBOSOMAL PROTEIN S20"/>
    <property type="match status" value="1"/>
</dbReference>
<dbReference type="PANTHER" id="PTHR33398:SF1">
    <property type="entry name" value="SMALL RIBOSOMAL SUBUNIT PROTEIN BS20C"/>
    <property type="match status" value="1"/>
</dbReference>
<dbReference type="Pfam" id="PF01649">
    <property type="entry name" value="Ribosomal_S20p"/>
    <property type="match status" value="1"/>
</dbReference>
<dbReference type="SUPFAM" id="SSF46992">
    <property type="entry name" value="Ribosomal protein S20"/>
    <property type="match status" value="1"/>
</dbReference>